<protein>
    <recommendedName>
        <fullName evidence="1">7-cyano-7-deazaguanine synthase</fullName>
        <ecNumber evidence="1">6.3.4.20</ecNumber>
    </recommendedName>
    <alternativeName>
        <fullName evidence="1">7-cyano-7-carbaguanine synthase</fullName>
    </alternativeName>
    <alternativeName>
        <fullName evidence="1">PreQ(0) synthase</fullName>
    </alternativeName>
    <alternativeName>
        <fullName evidence="1">Queuosine biosynthesis protein QueC</fullName>
    </alternativeName>
</protein>
<evidence type="ECO:0000255" key="1">
    <source>
        <dbReference type="HAMAP-Rule" id="MF_01633"/>
    </source>
</evidence>
<name>QUEC_STAAR</name>
<accession>Q6GIT0</accession>
<gene>
    <name evidence="1" type="primary">queC</name>
    <name type="ordered locus">SAR0765</name>
</gene>
<comment type="function">
    <text evidence="1">Catalyzes the ATP-dependent conversion of 7-carboxy-7-deazaguanine (CDG) to 7-cyano-7-deazaguanine (preQ(0)).</text>
</comment>
<comment type="catalytic activity">
    <reaction evidence="1">
        <text>7-carboxy-7-deazaguanine + NH4(+) + ATP = 7-cyano-7-deazaguanine + ADP + phosphate + H2O + H(+)</text>
        <dbReference type="Rhea" id="RHEA:27982"/>
        <dbReference type="ChEBI" id="CHEBI:15377"/>
        <dbReference type="ChEBI" id="CHEBI:15378"/>
        <dbReference type="ChEBI" id="CHEBI:28938"/>
        <dbReference type="ChEBI" id="CHEBI:30616"/>
        <dbReference type="ChEBI" id="CHEBI:43474"/>
        <dbReference type="ChEBI" id="CHEBI:45075"/>
        <dbReference type="ChEBI" id="CHEBI:61036"/>
        <dbReference type="ChEBI" id="CHEBI:456216"/>
        <dbReference type="EC" id="6.3.4.20"/>
    </reaction>
</comment>
<comment type="cofactor">
    <cofactor evidence="1">
        <name>Zn(2+)</name>
        <dbReference type="ChEBI" id="CHEBI:29105"/>
    </cofactor>
    <text evidence="1">Binds 1 zinc ion per subunit.</text>
</comment>
<comment type="pathway">
    <text evidence="1">Purine metabolism; 7-cyano-7-deazaguanine biosynthesis.</text>
</comment>
<comment type="subunit">
    <text evidence="1">Homodimer.</text>
</comment>
<comment type="similarity">
    <text evidence="1">Belongs to the QueC family.</text>
</comment>
<sequence>MESVLNNEKAIVVFSGGQDSTTCLFYAKKHFKEVELVTFNYGQRHDTEIEVAKQIAQDQGMKHHVLDMSLLSQLTPNALTQHDMEITNNEDGIPNTFVPARNLLFLSFAGALAYQIGAKHIITGVCETDFSGYPDCRDSFIKSMNVTLSLAMDKDFVIHTPLMWLNKAETWKLSDELEVLDYIRTKTLTCYNGIIGDGCGECPACHLRQRGLNQYLESKGAL</sequence>
<feature type="chain" id="PRO_0000246930" description="7-cyano-7-deazaguanine synthase">
    <location>
        <begin position="1"/>
        <end position="222"/>
    </location>
</feature>
<feature type="binding site" evidence="1">
    <location>
        <begin position="14"/>
        <end position="24"/>
    </location>
    <ligand>
        <name>ATP</name>
        <dbReference type="ChEBI" id="CHEBI:30616"/>
    </ligand>
</feature>
<feature type="binding site" evidence="1">
    <location>
        <position position="190"/>
    </location>
    <ligand>
        <name>Zn(2+)</name>
        <dbReference type="ChEBI" id="CHEBI:29105"/>
    </ligand>
</feature>
<feature type="binding site" evidence="1">
    <location>
        <position position="199"/>
    </location>
    <ligand>
        <name>Zn(2+)</name>
        <dbReference type="ChEBI" id="CHEBI:29105"/>
    </ligand>
</feature>
<feature type="binding site" evidence="1">
    <location>
        <position position="202"/>
    </location>
    <ligand>
        <name>Zn(2+)</name>
        <dbReference type="ChEBI" id="CHEBI:29105"/>
    </ligand>
</feature>
<feature type="binding site" evidence="1">
    <location>
        <position position="205"/>
    </location>
    <ligand>
        <name>Zn(2+)</name>
        <dbReference type="ChEBI" id="CHEBI:29105"/>
    </ligand>
</feature>
<proteinExistence type="inferred from homology"/>
<keyword id="KW-0067">ATP-binding</keyword>
<keyword id="KW-0436">Ligase</keyword>
<keyword id="KW-0479">Metal-binding</keyword>
<keyword id="KW-0547">Nucleotide-binding</keyword>
<keyword id="KW-0671">Queuosine biosynthesis</keyword>
<keyword id="KW-0862">Zinc</keyword>
<reference key="1">
    <citation type="journal article" date="2004" name="Proc. Natl. Acad. Sci. U.S.A.">
        <title>Complete genomes of two clinical Staphylococcus aureus strains: evidence for the rapid evolution of virulence and drug resistance.</title>
        <authorList>
            <person name="Holden M.T.G."/>
            <person name="Feil E.J."/>
            <person name="Lindsay J.A."/>
            <person name="Peacock S.J."/>
            <person name="Day N.P.J."/>
            <person name="Enright M.C."/>
            <person name="Foster T.J."/>
            <person name="Moore C.E."/>
            <person name="Hurst L."/>
            <person name="Atkin R."/>
            <person name="Barron A."/>
            <person name="Bason N."/>
            <person name="Bentley S.D."/>
            <person name="Chillingworth C."/>
            <person name="Chillingworth T."/>
            <person name="Churcher C."/>
            <person name="Clark L."/>
            <person name="Corton C."/>
            <person name="Cronin A."/>
            <person name="Doggett J."/>
            <person name="Dowd L."/>
            <person name="Feltwell T."/>
            <person name="Hance Z."/>
            <person name="Harris B."/>
            <person name="Hauser H."/>
            <person name="Holroyd S."/>
            <person name="Jagels K."/>
            <person name="James K.D."/>
            <person name="Lennard N."/>
            <person name="Line A."/>
            <person name="Mayes R."/>
            <person name="Moule S."/>
            <person name="Mungall K."/>
            <person name="Ormond D."/>
            <person name="Quail M.A."/>
            <person name="Rabbinowitsch E."/>
            <person name="Rutherford K.M."/>
            <person name="Sanders M."/>
            <person name="Sharp S."/>
            <person name="Simmonds M."/>
            <person name="Stevens K."/>
            <person name="Whitehead S."/>
            <person name="Barrell B.G."/>
            <person name="Spratt B.G."/>
            <person name="Parkhill J."/>
        </authorList>
    </citation>
    <scope>NUCLEOTIDE SEQUENCE [LARGE SCALE GENOMIC DNA]</scope>
    <source>
        <strain>MRSA252</strain>
    </source>
</reference>
<organism>
    <name type="scientific">Staphylococcus aureus (strain MRSA252)</name>
    <dbReference type="NCBI Taxonomy" id="282458"/>
    <lineage>
        <taxon>Bacteria</taxon>
        <taxon>Bacillati</taxon>
        <taxon>Bacillota</taxon>
        <taxon>Bacilli</taxon>
        <taxon>Bacillales</taxon>
        <taxon>Staphylococcaceae</taxon>
        <taxon>Staphylococcus</taxon>
    </lineage>
</organism>
<dbReference type="EC" id="6.3.4.20" evidence="1"/>
<dbReference type="EMBL" id="BX571856">
    <property type="protein sequence ID" value="CAG39775.1"/>
    <property type="molecule type" value="Genomic_DNA"/>
</dbReference>
<dbReference type="RefSeq" id="WP_000446724.1">
    <property type="nucleotide sequence ID" value="NC_002952.2"/>
</dbReference>
<dbReference type="SMR" id="Q6GIT0"/>
<dbReference type="KEGG" id="sar:SAR0765"/>
<dbReference type="HOGENOM" id="CLU_081854_0_0_9"/>
<dbReference type="UniPathway" id="UPA00391"/>
<dbReference type="Proteomes" id="UP000000596">
    <property type="component" value="Chromosome"/>
</dbReference>
<dbReference type="GO" id="GO:0005524">
    <property type="term" value="F:ATP binding"/>
    <property type="evidence" value="ECO:0007669"/>
    <property type="project" value="UniProtKB-UniRule"/>
</dbReference>
<dbReference type="GO" id="GO:0016879">
    <property type="term" value="F:ligase activity, forming carbon-nitrogen bonds"/>
    <property type="evidence" value="ECO:0007669"/>
    <property type="project" value="UniProtKB-UniRule"/>
</dbReference>
<dbReference type="GO" id="GO:0008270">
    <property type="term" value="F:zinc ion binding"/>
    <property type="evidence" value="ECO:0007669"/>
    <property type="project" value="UniProtKB-UniRule"/>
</dbReference>
<dbReference type="GO" id="GO:0008616">
    <property type="term" value="P:queuosine biosynthetic process"/>
    <property type="evidence" value="ECO:0007669"/>
    <property type="project" value="UniProtKB-UniRule"/>
</dbReference>
<dbReference type="CDD" id="cd01995">
    <property type="entry name" value="QueC-like"/>
    <property type="match status" value="1"/>
</dbReference>
<dbReference type="FunFam" id="3.40.50.620:FF:000017">
    <property type="entry name" value="7-cyano-7-deazaguanine synthase"/>
    <property type="match status" value="1"/>
</dbReference>
<dbReference type="Gene3D" id="3.40.50.620">
    <property type="entry name" value="HUPs"/>
    <property type="match status" value="1"/>
</dbReference>
<dbReference type="HAMAP" id="MF_01633">
    <property type="entry name" value="QueC"/>
    <property type="match status" value="1"/>
</dbReference>
<dbReference type="InterPro" id="IPR018317">
    <property type="entry name" value="QueC"/>
</dbReference>
<dbReference type="InterPro" id="IPR014729">
    <property type="entry name" value="Rossmann-like_a/b/a_fold"/>
</dbReference>
<dbReference type="NCBIfam" id="TIGR00364">
    <property type="entry name" value="7-cyano-7-deazaguanine synthase QueC"/>
    <property type="match status" value="1"/>
</dbReference>
<dbReference type="PANTHER" id="PTHR42914">
    <property type="entry name" value="7-CYANO-7-DEAZAGUANINE SYNTHASE"/>
    <property type="match status" value="1"/>
</dbReference>
<dbReference type="PANTHER" id="PTHR42914:SF1">
    <property type="entry name" value="7-CYANO-7-DEAZAGUANINE SYNTHASE"/>
    <property type="match status" value="1"/>
</dbReference>
<dbReference type="Pfam" id="PF06508">
    <property type="entry name" value="QueC"/>
    <property type="match status" value="1"/>
</dbReference>
<dbReference type="PIRSF" id="PIRSF006293">
    <property type="entry name" value="ExsB"/>
    <property type="match status" value="1"/>
</dbReference>
<dbReference type="SUPFAM" id="SSF52402">
    <property type="entry name" value="Adenine nucleotide alpha hydrolases-like"/>
    <property type="match status" value="1"/>
</dbReference>